<accession>O83223</accession>
<comment type="function">
    <text evidence="1">Protein S19 forms a complex with S13 that binds strongly to the 16S ribosomal RNA.</text>
</comment>
<comment type="similarity">
    <text evidence="2">Belongs to the universal ribosomal protein uS19 family.</text>
</comment>
<proteinExistence type="inferred from homology"/>
<reference key="1">
    <citation type="journal article" date="1998" name="Science">
        <title>Complete genome sequence of Treponema pallidum, the syphilis spirochete.</title>
        <authorList>
            <person name="Fraser C.M."/>
            <person name="Norris S.J."/>
            <person name="Weinstock G.M."/>
            <person name="White O."/>
            <person name="Sutton G.G."/>
            <person name="Dodson R.J."/>
            <person name="Gwinn M.L."/>
            <person name="Hickey E.K."/>
            <person name="Clayton R.A."/>
            <person name="Ketchum K.A."/>
            <person name="Sodergren E."/>
            <person name="Hardham J.M."/>
            <person name="McLeod M.P."/>
            <person name="Salzberg S.L."/>
            <person name="Peterson J.D."/>
            <person name="Khalak H.G."/>
            <person name="Richardson D.L."/>
            <person name="Howell J.K."/>
            <person name="Chidambaram M."/>
            <person name="Utterback T.R."/>
            <person name="McDonald L.A."/>
            <person name="Artiach P."/>
            <person name="Bowman C."/>
            <person name="Cotton M.D."/>
            <person name="Fujii C."/>
            <person name="Garland S.A."/>
            <person name="Hatch B."/>
            <person name="Horst K."/>
            <person name="Roberts K.M."/>
            <person name="Sandusky M."/>
            <person name="Weidman J.F."/>
            <person name="Smith H.O."/>
            <person name="Venter J.C."/>
        </authorList>
    </citation>
    <scope>NUCLEOTIDE SEQUENCE [LARGE SCALE GENOMIC DNA]</scope>
    <source>
        <strain>Nichols</strain>
    </source>
</reference>
<protein>
    <recommendedName>
        <fullName evidence="2">Small ribosomal subunit protein uS19</fullName>
    </recommendedName>
    <alternativeName>
        <fullName>30S ribosomal protein S19</fullName>
    </alternativeName>
</protein>
<name>RS19_TREPA</name>
<evidence type="ECO:0000250" key="1"/>
<evidence type="ECO:0000305" key="2"/>
<organism>
    <name type="scientific">Treponema pallidum (strain Nichols)</name>
    <dbReference type="NCBI Taxonomy" id="243276"/>
    <lineage>
        <taxon>Bacteria</taxon>
        <taxon>Pseudomonadati</taxon>
        <taxon>Spirochaetota</taxon>
        <taxon>Spirochaetia</taxon>
        <taxon>Spirochaetales</taxon>
        <taxon>Treponemataceae</taxon>
        <taxon>Treponema</taxon>
    </lineage>
</organism>
<sequence length="95" mass="10816">MSRSVKKGPFVDKKLYKRVVEMNKAANQRNKKVIKSYSRCSTIIPEMVGFTISVHNGKSWIPVYITEEFVGHKLGEFSPTRVFRGHSGSDKKVGR</sequence>
<feature type="chain" id="PRO_0000129932" description="Small ribosomal subunit protein uS19">
    <location>
        <begin position="1"/>
        <end position="95"/>
    </location>
</feature>
<dbReference type="EMBL" id="AE000520">
    <property type="protein sequence ID" value="AAC65178.1"/>
    <property type="molecule type" value="Genomic_DNA"/>
</dbReference>
<dbReference type="PIR" id="C71355">
    <property type="entry name" value="C71355"/>
</dbReference>
<dbReference type="RefSeq" id="WP_010881640.1">
    <property type="nucleotide sequence ID" value="NC_021490.2"/>
</dbReference>
<dbReference type="SMR" id="O83223"/>
<dbReference type="IntAct" id="O83223">
    <property type="interactions" value="2"/>
</dbReference>
<dbReference type="STRING" id="243276.TP_0193"/>
<dbReference type="EnsemblBacteria" id="AAC65178">
    <property type="protein sequence ID" value="AAC65178"/>
    <property type="gene ID" value="TP_0193"/>
</dbReference>
<dbReference type="GeneID" id="93875981"/>
<dbReference type="KEGG" id="tpa:TP_0193"/>
<dbReference type="KEGG" id="tpw:TPANIC_0193"/>
<dbReference type="eggNOG" id="COG0185">
    <property type="taxonomic scope" value="Bacteria"/>
</dbReference>
<dbReference type="HOGENOM" id="CLU_144911_0_1_12"/>
<dbReference type="OrthoDB" id="9797833at2"/>
<dbReference type="Proteomes" id="UP000000811">
    <property type="component" value="Chromosome"/>
</dbReference>
<dbReference type="GO" id="GO:0005737">
    <property type="term" value="C:cytoplasm"/>
    <property type="evidence" value="ECO:0007669"/>
    <property type="project" value="UniProtKB-ARBA"/>
</dbReference>
<dbReference type="GO" id="GO:0015935">
    <property type="term" value="C:small ribosomal subunit"/>
    <property type="evidence" value="ECO:0007669"/>
    <property type="project" value="InterPro"/>
</dbReference>
<dbReference type="GO" id="GO:0019843">
    <property type="term" value="F:rRNA binding"/>
    <property type="evidence" value="ECO:0007669"/>
    <property type="project" value="UniProtKB-UniRule"/>
</dbReference>
<dbReference type="GO" id="GO:0003735">
    <property type="term" value="F:structural constituent of ribosome"/>
    <property type="evidence" value="ECO:0007669"/>
    <property type="project" value="InterPro"/>
</dbReference>
<dbReference type="GO" id="GO:0000028">
    <property type="term" value="P:ribosomal small subunit assembly"/>
    <property type="evidence" value="ECO:0007669"/>
    <property type="project" value="TreeGrafter"/>
</dbReference>
<dbReference type="GO" id="GO:0006412">
    <property type="term" value="P:translation"/>
    <property type="evidence" value="ECO:0007669"/>
    <property type="project" value="UniProtKB-UniRule"/>
</dbReference>
<dbReference type="FunFam" id="3.30.860.10:FF:000001">
    <property type="entry name" value="30S ribosomal protein S19"/>
    <property type="match status" value="1"/>
</dbReference>
<dbReference type="Gene3D" id="3.30.860.10">
    <property type="entry name" value="30s Ribosomal Protein S19, Chain A"/>
    <property type="match status" value="1"/>
</dbReference>
<dbReference type="HAMAP" id="MF_00531">
    <property type="entry name" value="Ribosomal_uS19"/>
    <property type="match status" value="1"/>
</dbReference>
<dbReference type="InterPro" id="IPR002222">
    <property type="entry name" value="Ribosomal_uS19"/>
</dbReference>
<dbReference type="InterPro" id="IPR005732">
    <property type="entry name" value="Ribosomal_uS19_bac-type"/>
</dbReference>
<dbReference type="InterPro" id="IPR020934">
    <property type="entry name" value="Ribosomal_uS19_CS"/>
</dbReference>
<dbReference type="InterPro" id="IPR023575">
    <property type="entry name" value="Ribosomal_uS19_SF"/>
</dbReference>
<dbReference type="NCBIfam" id="TIGR01050">
    <property type="entry name" value="rpsS_bact"/>
    <property type="match status" value="1"/>
</dbReference>
<dbReference type="PANTHER" id="PTHR11880">
    <property type="entry name" value="RIBOSOMAL PROTEIN S19P FAMILY MEMBER"/>
    <property type="match status" value="1"/>
</dbReference>
<dbReference type="PANTHER" id="PTHR11880:SF8">
    <property type="entry name" value="SMALL RIBOSOMAL SUBUNIT PROTEIN US19M"/>
    <property type="match status" value="1"/>
</dbReference>
<dbReference type="Pfam" id="PF00203">
    <property type="entry name" value="Ribosomal_S19"/>
    <property type="match status" value="1"/>
</dbReference>
<dbReference type="PIRSF" id="PIRSF002144">
    <property type="entry name" value="Ribosomal_S19"/>
    <property type="match status" value="1"/>
</dbReference>
<dbReference type="PRINTS" id="PR00975">
    <property type="entry name" value="RIBOSOMALS19"/>
</dbReference>
<dbReference type="SUPFAM" id="SSF54570">
    <property type="entry name" value="Ribosomal protein S19"/>
    <property type="match status" value="1"/>
</dbReference>
<dbReference type="PROSITE" id="PS00323">
    <property type="entry name" value="RIBOSOMAL_S19"/>
    <property type="match status" value="1"/>
</dbReference>
<gene>
    <name type="primary">rpsS</name>
    <name type="ordered locus">TP_0193</name>
</gene>
<keyword id="KW-1185">Reference proteome</keyword>
<keyword id="KW-0687">Ribonucleoprotein</keyword>
<keyword id="KW-0689">Ribosomal protein</keyword>
<keyword id="KW-0694">RNA-binding</keyword>
<keyword id="KW-0699">rRNA-binding</keyword>